<dbReference type="EC" id="2.7.1.105" evidence="3"/>
<dbReference type="EC" id="3.1.3.46" evidence="3"/>
<dbReference type="EMBL" id="CR859468">
    <property type="protein sequence ID" value="CAH91639.1"/>
    <property type="molecule type" value="mRNA"/>
</dbReference>
<dbReference type="EMBL" id="CR860843">
    <property type="protein sequence ID" value="CAH92952.1"/>
    <property type="molecule type" value="mRNA"/>
</dbReference>
<dbReference type="EMBL" id="CR861456">
    <property type="protein sequence ID" value="CAH93512.1"/>
    <property type="molecule type" value="mRNA"/>
</dbReference>
<dbReference type="RefSeq" id="NP_001125963.1">
    <property type="nucleotide sequence ID" value="NM_001132491.1"/>
</dbReference>
<dbReference type="RefSeq" id="NP_001128959.1">
    <property type="nucleotide sequence ID" value="NM_001135487.1"/>
</dbReference>
<dbReference type="RefSeq" id="XP_024108822.1">
    <molecule id="Q5R9C1-2"/>
    <property type="nucleotide sequence ID" value="XM_024253054.2"/>
</dbReference>
<dbReference type="RefSeq" id="XP_054377545.1">
    <molecule id="Q5R9C1-3"/>
    <property type="nucleotide sequence ID" value="XM_054521570.1"/>
</dbReference>
<dbReference type="SMR" id="Q5R9C1"/>
<dbReference type="FunCoup" id="Q5R9C1">
    <property type="interactions" value="2364"/>
</dbReference>
<dbReference type="STRING" id="9601.ENSPPYP00000002394"/>
<dbReference type="Ensembl" id="ENSPPYT00000039436.1">
    <molecule id="Q5R9C1-1"/>
    <property type="protein sequence ID" value="ENSPPYP00000035295.1"/>
    <property type="gene ID" value="ENSPPYG00000002068.3"/>
</dbReference>
<dbReference type="Ensembl" id="ENSPPYT00000044028.1">
    <molecule id="Q5R9C1-3"/>
    <property type="protein sequence ID" value="ENSPPYP00000028360.1"/>
    <property type="gene ID" value="ENSPPYG00000002068.3"/>
</dbReference>
<dbReference type="GeneID" id="100172898"/>
<dbReference type="KEGG" id="pon:100172898"/>
<dbReference type="CTD" id="5209"/>
<dbReference type="eggNOG" id="KOG0234">
    <property type="taxonomic scope" value="Eukaryota"/>
</dbReference>
<dbReference type="GeneTree" id="ENSGT00950000182835"/>
<dbReference type="InParanoid" id="Q5R9C1"/>
<dbReference type="OrthoDB" id="267323at2759"/>
<dbReference type="Proteomes" id="UP000001595">
    <property type="component" value="Chromosome 10"/>
</dbReference>
<dbReference type="GO" id="GO:0005829">
    <property type="term" value="C:cytosol"/>
    <property type="evidence" value="ECO:0007669"/>
    <property type="project" value="TreeGrafter"/>
</dbReference>
<dbReference type="GO" id="GO:0003873">
    <property type="term" value="F:6-phosphofructo-2-kinase activity"/>
    <property type="evidence" value="ECO:0000250"/>
    <property type="project" value="UniProtKB"/>
</dbReference>
<dbReference type="GO" id="GO:0005524">
    <property type="term" value="F:ATP binding"/>
    <property type="evidence" value="ECO:0007669"/>
    <property type="project" value="UniProtKB-KW"/>
</dbReference>
<dbReference type="GO" id="GO:0004331">
    <property type="term" value="F:fructose-2,6-bisphosphate 2-phosphatase activity"/>
    <property type="evidence" value="ECO:0000250"/>
    <property type="project" value="UniProtKB"/>
</dbReference>
<dbReference type="GO" id="GO:0006003">
    <property type="term" value="P:fructose 2,6-bisphosphate metabolic process"/>
    <property type="evidence" value="ECO:0007669"/>
    <property type="project" value="InterPro"/>
</dbReference>
<dbReference type="GO" id="GO:0006000">
    <property type="term" value="P:fructose metabolic process"/>
    <property type="evidence" value="ECO:0007669"/>
    <property type="project" value="InterPro"/>
</dbReference>
<dbReference type="CDD" id="cd07067">
    <property type="entry name" value="HP_PGM_like"/>
    <property type="match status" value="1"/>
</dbReference>
<dbReference type="FunFam" id="3.40.50.1240:FF:000001">
    <property type="entry name" value="6-phosphofructo-2-kinase/fructose-2, 6-bisphosphatase 3 isoform 2"/>
    <property type="match status" value="1"/>
</dbReference>
<dbReference type="FunFam" id="3.40.50.300:FF:000047">
    <property type="entry name" value="6-phosphofructo-2-kinase/fructose-2, 6-bisphosphatase 3 isoform 2"/>
    <property type="match status" value="1"/>
</dbReference>
<dbReference type="Gene3D" id="3.40.50.300">
    <property type="entry name" value="P-loop containing nucleotide triphosphate hydrolases"/>
    <property type="match status" value="1"/>
</dbReference>
<dbReference type="Gene3D" id="3.40.50.1240">
    <property type="entry name" value="Phosphoglycerate mutase-like"/>
    <property type="match status" value="1"/>
</dbReference>
<dbReference type="InterPro" id="IPR003094">
    <property type="entry name" value="6Pfruct_kin"/>
</dbReference>
<dbReference type="InterPro" id="IPR013079">
    <property type="entry name" value="6Phosfructo_kin"/>
</dbReference>
<dbReference type="InterPro" id="IPR013078">
    <property type="entry name" value="His_Pase_superF_clade-1"/>
</dbReference>
<dbReference type="InterPro" id="IPR029033">
    <property type="entry name" value="His_PPase_superfam"/>
</dbReference>
<dbReference type="InterPro" id="IPR027417">
    <property type="entry name" value="P-loop_NTPase"/>
</dbReference>
<dbReference type="InterPro" id="IPR001345">
    <property type="entry name" value="PG/BPGM_mutase_AS"/>
</dbReference>
<dbReference type="PANTHER" id="PTHR10606">
    <property type="entry name" value="6-PHOSPHOFRUCTO-2-KINASE/FRUCTOSE-2,6-BISPHOSPHATASE"/>
    <property type="match status" value="1"/>
</dbReference>
<dbReference type="PANTHER" id="PTHR10606:SF41">
    <property type="entry name" value="6-PHOSPHOFRUCTO-2-KINASE_FRUCTOSE-2,6-BISPHOSPHATASE 3"/>
    <property type="match status" value="1"/>
</dbReference>
<dbReference type="Pfam" id="PF01591">
    <property type="entry name" value="6PF2K"/>
    <property type="match status" value="1"/>
</dbReference>
<dbReference type="Pfam" id="PF00300">
    <property type="entry name" value="His_Phos_1"/>
    <property type="match status" value="1"/>
</dbReference>
<dbReference type="PIRSF" id="PIRSF000709">
    <property type="entry name" value="6PFK_2-Ptase"/>
    <property type="match status" value="1"/>
</dbReference>
<dbReference type="PRINTS" id="PR00991">
    <property type="entry name" value="6PFRUCTKNASE"/>
</dbReference>
<dbReference type="SMART" id="SM00855">
    <property type="entry name" value="PGAM"/>
    <property type="match status" value="1"/>
</dbReference>
<dbReference type="SUPFAM" id="SSF52540">
    <property type="entry name" value="P-loop containing nucleoside triphosphate hydrolases"/>
    <property type="match status" value="1"/>
</dbReference>
<dbReference type="SUPFAM" id="SSF53254">
    <property type="entry name" value="Phosphoglycerate mutase-like"/>
    <property type="match status" value="1"/>
</dbReference>
<dbReference type="PROSITE" id="PS00175">
    <property type="entry name" value="PG_MUTASE"/>
    <property type="match status" value="1"/>
</dbReference>
<feature type="chain" id="PRO_0000345149" description="6-phosphofructo-2-kinase/fructose-2,6-bisphosphatase 3">
    <location>
        <begin position="1"/>
        <end position="514"/>
    </location>
</feature>
<feature type="region of interest" description="6-phosphofructo-2-kinase">
    <location>
        <begin position="1"/>
        <end position="245"/>
    </location>
</feature>
<feature type="region of interest" description="Fructose-2,6-bisphosphatase">
    <location>
        <begin position="246"/>
        <end position="514"/>
    </location>
</feature>
<feature type="region of interest" description="Disordered" evidence="5">
    <location>
        <begin position="444"/>
        <end position="475"/>
    </location>
</feature>
<feature type="active site" evidence="4">
    <location>
        <position position="125"/>
    </location>
</feature>
<feature type="active site" evidence="4">
    <location>
        <position position="155"/>
    </location>
</feature>
<feature type="active site" description="Tele-phosphohistidine intermediate" evidence="3">
    <location>
        <position position="254"/>
    </location>
</feature>
<feature type="active site" description="Proton donor/acceptor" evidence="3">
    <location>
        <position position="323"/>
    </location>
</feature>
<feature type="binding site" evidence="3">
    <location>
        <begin position="42"/>
        <end position="50"/>
    </location>
    <ligand>
        <name>ATP</name>
        <dbReference type="ChEBI" id="CHEBI:30616"/>
    </ligand>
</feature>
<feature type="binding site" evidence="3">
    <location>
        <position position="75"/>
    </location>
    <ligand>
        <name>beta-D-fructose 6-phosphate</name>
        <dbReference type="ChEBI" id="CHEBI:57634"/>
    </ligand>
</feature>
<feature type="binding site" evidence="3">
    <location>
        <position position="99"/>
    </location>
    <ligand>
        <name>beta-D-fructose 6-phosphate</name>
        <dbReference type="ChEBI" id="CHEBI:57634"/>
    </ligand>
</feature>
<feature type="binding site" evidence="3">
    <location>
        <position position="127"/>
    </location>
    <ligand>
        <name>beta-D-fructose 6-phosphate</name>
        <dbReference type="ChEBI" id="CHEBI:57634"/>
    </ligand>
</feature>
<feature type="binding site" evidence="3">
    <location>
        <position position="133"/>
    </location>
    <ligand>
        <name>beta-D-fructose 6-phosphate</name>
        <dbReference type="ChEBI" id="CHEBI:57634"/>
    </ligand>
</feature>
<feature type="binding site" evidence="3">
    <location>
        <begin position="164"/>
        <end position="169"/>
    </location>
    <ligand>
        <name>ATP</name>
        <dbReference type="ChEBI" id="CHEBI:30616"/>
    </ligand>
</feature>
<feature type="binding site" evidence="3">
    <location>
        <position position="169"/>
    </location>
    <ligand>
        <name>beta-D-fructose 6-phosphate</name>
        <dbReference type="ChEBI" id="CHEBI:57634"/>
    </ligand>
</feature>
<feature type="binding site" evidence="3">
    <location>
        <position position="190"/>
    </location>
    <ligand>
        <name>beta-D-fructose 6-phosphate</name>
        <dbReference type="ChEBI" id="CHEBI:57634"/>
    </ligand>
</feature>
<feature type="binding site" evidence="3">
    <location>
        <position position="194"/>
    </location>
    <ligand>
        <name>beta-D-fructose 6-phosphate</name>
        <dbReference type="ChEBI" id="CHEBI:57634"/>
    </ligand>
</feature>
<feature type="binding site" evidence="3">
    <location>
        <position position="253"/>
    </location>
    <ligand>
        <name>beta-D-fructose 2,6-bisphosphate</name>
        <dbReference type="ChEBI" id="CHEBI:58579"/>
    </ligand>
</feature>
<feature type="binding site" evidence="3">
    <location>
        <position position="260"/>
    </location>
    <ligand>
        <name>beta-D-fructose 2,6-bisphosphate</name>
        <dbReference type="ChEBI" id="CHEBI:58579"/>
    </ligand>
</feature>
<feature type="binding site" evidence="3">
    <location>
        <position position="266"/>
    </location>
    <ligand>
        <name>beta-D-fructose 2,6-bisphosphate</name>
        <dbReference type="ChEBI" id="CHEBI:58579"/>
    </ligand>
</feature>
<feature type="binding site" evidence="3">
    <location>
        <position position="334"/>
    </location>
    <ligand>
        <name>beta-D-fructose 2,6-bisphosphate</name>
        <dbReference type="ChEBI" id="CHEBI:58579"/>
    </ligand>
</feature>
<feature type="binding site" evidence="2">
    <location>
        <begin position="345"/>
        <end position="348"/>
    </location>
    <ligand>
        <name>ATP</name>
        <dbReference type="ChEBI" id="CHEBI:30616"/>
    </ligand>
</feature>
<feature type="binding site" evidence="3">
    <location>
        <position position="348"/>
    </location>
    <ligand>
        <name>beta-D-fructose 2,6-bisphosphate</name>
        <dbReference type="ChEBI" id="CHEBI:58579"/>
    </ligand>
</feature>
<feature type="binding site" evidence="3">
    <location>
        <position position="352"/>
    </location>
    <ligand>
        <name>beta-D-fructose 2,6-bisphosphate</name>
        <dbReference type="ChEBI" id="CHEBI:58579"/>
    </ligand>
</feature>
<feature type="binding site" evidence="3">
    <location>
        <position position="363"/>
    </location>
    <ligand>
        <name>beta-D-fructose 2,6-bisphosphate</name>
        <dbReference type="ChEBI" id="CHEBI:58579"/>
    </ligand>
</feature>
<feature type="binding site" evidence="2">
    <location>
        <begin position="389"/>
        <end position="393"/>
    </location>
    <ligand>
        <name>ATP</name>
        <dbReference type="ChEBI" id="CHEBI:30616"/>
    </ligand>
</feature>
<feature type="binding site" evidence="3">
    <location>
        <position position="389"/>
    </location>
    <ligand>
        <name>beta-D-fructose 2,6-bisphosphate</name>
        <dbReference type="ChEBI" id="CHEBI:58579"/>
    </ligand>
</feature>
<feature type="binding site" evidence="2">
    <location>
        <position position="393"/>
    </location>
    <ligand>
        <name>beta-D-fructose 2,6-bisphosphate</name>
        <dbReference type="ChEBI" id="CHEBI:58579"/>
    </ligand>
</feature>
<feature type="binding site" evidence="3">
    <location>
        <position position="425"/>
    </location>
    <ligand>
        <name>ATP</name>
        <dbReference type="ChEBI" id="CHEBI:30616"/>
    </ligand>
</feature>
<feature type="site" description="Transition state stabilizer" evidence="3">
    <location>
        <position position="253"/>
    </location>
</feature>
<feature type="site" description="Transition state stabilizer" evidence="3">
    <location>
        <position position="260"/>
    </location>
</feature>
<feature type="site" description="Transition state stabilizer" evidence="3">
    <location>
        <position position="388"/>
    </location>
</feature>
<feature type="modified residue" description="Phosphoserine; by AMPK and PKA" evidence="3">
    <location>
        <position position="461"/>
    </location>
</feature>
<feature type="modified residue" description="Phosphothreonine" evidence="3">
    <location>
        <position position="463"/>
    </location>
</feature>
<feature type="modified residue" description="Phosphoserine" evidence="3">
    <location>
        <position position="467"/>
    </location>
</feature>
<feature type="modified residue" description="Phosphothreonine; by PKC" evidence="1">
    <location>
        <position position="471"/>
    </location>
</feature>
<feature type="splice variant" id="VSP_034919" description="In isoform 2 and isoform 3." evidence="6">
    <original>LELTQSRVQKIWVPVDHRPSLPRS</original>
    <variation>FRKA</variation>
    <location>
        <begin position="3"/>
        <end position="26"/>
    </location>
</feature>
<feature type="splice variant" id="VSP_034920" description="In isoform 2." evidence="6">
    <original>PLLGQACLT</original>
    <variation>NMKGSRSSADSSRKH</variation>
    <location>
        <begin position="506"/>
        <end position="514"/>
    </location>
</feature>
<feature type="splice variant" id="VSP_034921" description="In isoform 3." evidence="6">
    <original>T</original>
    <variation>RTVCHIFSKFSPY</variation>
    <location>
        <position position="514"/>
    </location>
</feature>
<feature type="sequence conflict" description="In Ref. 1; CAH92952." evidence="7" ref="1">
    <original>V</original>
    <variation>A</variation>
    <location>
        <position position="37"/>
    </location>
</feature>
<feature type="sequence conflict" description="In Ref. 1; CAH93512." evidence="7" ref="1">
    <original>V</original>
    <variation>A</variation>
    <location>
        <position position="224"/>
    </location>
</feature>
<feature type="sequence conflict" description="In Ref. 1; CAH91639." evidence="7" ref="1">
    <original>A</original>
    <variation>V</variation>
    <location>
        <position position="326"/>
    </location>
</feature>
<protein>
    <recommendedName>
        <fullName>6-phosphofructo-2-kinase/fructose-2,6-bisphosphatase 3</fullName>
        <shortName>6PF-2-K/Fru-2,6-P2ase 3</shortName>
        <shortName>PFK/FBPase 3</shortName>
    </recommendedName>
    <alternativeName>
        <fullName>6PF-2-K/Fru-2,6-P2ase brain/placenta-type isozyme</fullName>
    </alternativeName>
    <domain>
        <recommendedName>
            <fullName>6-phosphofructo-2-kinase</fullName>
            <ecNumber evidence="3">2.7.1.105</ecNumber>
        </recommendedName>
    </domain>
    <domain>
        <recommendedName>
            <fullName>Fructose-2,6-bisphosphatase</fullName>
            <ecNumber evidence="3">3.1.3.46</ecNumber>
        </recommendedName>
    </domain>
</protein>
<reference key="1">
    <citation type="submission" date="2004-11" db="EMBL/GenBank/DDBJ databases">
        <authorList>
            <consortium name="The German cDNA consortium"/>
        </authorList>
    </citation>
    <scope>NUCLEOTIDE SEQUENCE [LARGE SCALE MRNA] (ISOFORMS 1; 2 AND 3)</scope>
    <source>
        <tissue>Brain cortex</tissue>
        <tissue>Kidney</tissue>
    </source>
</reference>
<organism>
    <name type="scientific">Pongo abelii</name>
    <name type="common">Sumatran orangutan</name>
    <name type="synonym">Pongo pygmaeus abelii</name>
    <dbReference type="NCBI Taxonomy" id="9601"/>
    <lineage>
        <taxon>Eukaryota</taxon>
        <taxon>Metazoa</taxon>
        <taxon>Chordata</taxon>
        <taxon>Craniata</taxon>
        <taxon>Vertebrata</taxon>
        <taxon>Euteleostomi</taxon>
        <taxon>Mammalia</taxon>
        <taxon>Eutheria</taxon>
        <taxon>Euarchontoglires</taxon>
        <taxon>Primates</taxon>
        <taxon>Haplorrhini</taxon>
        <taxon>Catarrhini</taxon>
        <taxon>Hominidae</taxon>
        <taxon>Pongo</taxon>
    </lineage>
</organism>
<proteinExistence type="evidence at transcript level"/>
<comment type="function">
    <text evidence="3">Catalyzes both the synthesis and degradation of fructose 2,6-bisphosphate.</text>
</comment>
<comment type="catalytic activity">
    <reaction evidence="3">
        <text>beta-D-fructose 2,6-bisphosphate + H2O = beta-D-fructose 6-phosphate + phosphate</text>
        <dbReference type="Rhea" id="RHEA:17289"/>
        <dbReference type="ChEBI" id="CHEBI:15377"/>
        <dbReference type="ChEBI" id="CHEBI:43474"/>
        <dbReference type="ChEBI" id="CHEBI:57634"/>
        <dbReference type="ChEBI" id="CHEBI:58579"/>
        <dbReference type="EC" id="3.1.3.46"/>
    </reaction>
    <physiologicalReaction direction="left-to-right" evidence="3">
        <dbReference type="Rhea" id="RHEA:17290"/>
    </physiologicalReaction>
</comment>
<comment type="catalytic activity">
    <reaction evidence="3">
        <text>beta-D-fructose 6-phosphate + ATP = beta-D-fructose 2,6-bisphosphate + ADP + H(+)</text>
        <dbReference type="Rhea" id="RHEA:15653"/>
        <dbReference type="ChEBI" id="CHEBI:15378"/>
        <dbReference type="ChEBI" id="CHEBI:30616"/>
        <dbReference type="ChEBI" id="CHEBI:57634"/>
        <dbReference type="ChEBI" id="CHEBI:58579"/>
        <dbReference type="ChEBI" id="CHEBI:456216"/>
        <dbReference type="EC" id="2.7.1.105"/>
    </reaction>
    <physiologicalReaction direction="left-to-right" evidence="3">
        <dbReference type="Rhea" id="RHEA:15654"/>
    </physiologicalReaction>
</comment>
<comment type="subunit">
    <text evidence="3">Homodimer. Forms a heterodimer with PFKFB2 (By similarity).</text>
</comment>
<comment type="alternative products">
    <event type="alternative splicing"/>
    <isoform>
        <id>Q5R9C1-1</id>
        <name>1</name>
        <sequence type="displayed"/>
    </isoform>
    <isoform>
        <id>Q5R9C1-2</id>
        <name>2</name>
        <sequence type="described" ref="VSP_034919 VSP_034920"/>
    </isoform>
    <isoform>
        <id>Q5R9C1-3</id>
        <name>3</name>
        <sequence type="described" ref="VSP_034919 VSP_034921"/>
    </isoform>
</comment>
<comment type="PTM">
    <text evidence="3">Phosphorylation by AMPK stimulates activity.</text>
</comment>
<comment type="similarity">
    <text evidence="7">In the C-terminal section; belongs to the phosphoglycerate mutase family.</text>
</comment>
<evidence type="ECO:0000250" key="1"/>
<evidence type="ECO:0000250" key="2">
    <source>
        <dbReference type="UniProtKB" id="P07953"/>
    </source>
</evidence>
<evidence type="ECO:0000250" key="3">
    <source>
        <dbReference type="UniProtKB" id="Q16875"/>
    </source>
</evidence>
<evidence type="ECO:0000255" key="4"/>
<evidence type="ECO:0000256" key="5">
    <source>
        <dbReference type="SAM" id="MobiDB-lite"/>
    </source>
</evidence>
<evidence type="ECO:0000303" key="6">
    <source ref="1"/>
</evidence>
<evidence type="ECO:0000305" key="7"/>
<name>F263_PONAB</name>
<keyword id="KW-0025">Alternative splicing</keyword>
<keyword id="KW-0067">ATP-binding</keyword>
<keyword id="KW-0378">Hydrolase</keyword>
<keyword id="KW-0418">Kinase</keyword>
<keyword id="KW-0511">Multifunctional enzyme</keyword>
<keyword id="KW-0547">Nucleotide-binding</keyword>
<keyword id="KW-0597">Phosphoprotein</keyword>
<keyword id="KW-1185">Reference proteome</keyword>
<keyword id="KW-0808">Transferase</keyword>
<sequence length="514" mass="58876">MPLELTQSRVQKIWVPVDHRPSLPRSCGPKLTNSPTVIVMVGLPARGKTYISKKLTRYLNWIGVPTKVFNVGEYRREAVKQYSSYNFFRPDNEEAMKVRKQCALAALRDVKSYLAKEGGQIAVFDATNTTRERRHMILHFAKENDFKAFFIESVCDDPTVVASNIMEVKISSPDYKDCNSAEAMDDFMKRISCYEASYQPLDPDKCDRDLSLIKVIDVGRRFLVNRVQDHIQSRIVYYLMNIHVQPRTIYLCRHGENEHNLQGRIGGDSGLSSRGKKFASALSKFVEEQNLKDLRVWTSQLKSTIQTAEALRLPYEQWKALNEIDAGVCEELTYEEIRDTYPEEYALREQDKYYYRYPTGESYQDLVQRLEPVIMELERQENVLVICHQAVLRCLLAYFLDKSAEEMPYLKCPLHTVLKLTPVAYGCRVESIYLNVESVCTHRERSEDAKKGPNPLMRRNSVTPLASPEPTKKPRINSFEEHVASTSAALPSCLPPEVPTQLPGQPLLGQACLT</sequence>
<accession>Q5R9C1</accession>
<accession>Q5R404</accession>
<accession>Q5R5L4</accession>
<gene>
    <name type="primary">PFKFB3</name>
</gene>